<accession>Q30KQ4</accession>
<protein>
    <recommendedName>
        <fullName>Beta-defensin 116</fullName>
    </recommendedName>
    <alternativeName>
        <fullName>Beta-defensin 16</fullName>
        <shortName>DEFB-16</shortName>
    </alternativeName>
    <alternativeName>
        <fullName>Defensin, beta 116</fullName>
    </alternativeName>
</protein>
<comment type="function">
    <text evidence="1">Has antibacterial activity.</text>
</comment>
<comment type="subcellular location">
    <subcellularLocation>
        <location evidence="1">Secreted</location>
    </subcellularLocation>
</comment>
<comment type="similarity">
    <text evidence="4">Belongs to the beta-defensin family.</text>
</comment>
<organism>
    <name type="scientific">Homo sapiens</name>
    <name type="common">Human</name>
    <dbReference type="NCBI Taxonomy" id="9606"/>
    <lineage>
        <taxon>Eukaryota</taxon>
        <taxon>Metazoa</taxon>
        <taxon>Chordata</taxon>
        <taxon>Craniata</taxon>
        <taxon>Vertebrata</taxon>
        <taxon>Euteleostomi</taxon>
        <taxon>Mammalia</taxon>
        <taxon>Eutheria</taxon>
        <taxon>Euarchontoglires</taxon>
        <taxon>Primates</taxon>
        <taxon>Haplorrhini</taxon>
        <taxon>Catarrhini</taxon>
        <taxon>Hominidae</taxon>
        <taxon>Homo</taxon>
    </lineage>
</organism>
<reference key="1">
    <citation type="journal article" date="2005" name="Physiol. Genomics">
        <title>Cross-species analysis of the mammalian beta-defensin gene family: presence of syntenic gene clusters and preferential expression in the male reproductive tract.</title>
        <authorList>
            <person name="Patil A.A."/>
            <person name="Cai Y."/>
            <person name="Sang Y."/>
            <person name="Blecha F."/>
            <person name="Zhang G."/>
        </authorList>
    </citation>
    <scope>NUCLEOTIDE SEQUENCE [MRNA]</scope>
</reference>
<reference key="2">
    <citation type="journal article" date="2001" name="Nature">
        <title>The DNA sequence and comparative analysis of human chromosome 20.</title>
        <authorList>
            <person name="Deloukas P."/>
            <person name="Matthews L.H."/>
            <person name="Ashurst J.L."/>
            <person name="Burton J."/>
            <person name="Gilbert J.G.R."/>
            <person name="Jones M."/>
            <person name="Stavrides G."/>
            <person name="Almeida J.P."/>
            <person name="Babbage A.K."/>
            <person name="Bagguley C.L."/>
            <person name="Bailey J."/>
            <person name="Barlow K.F."/>
            <person name="Bates K.N."/>
            <person name="Beard L.M."/>
            <person name="Beare D.M."/>
            <person name="Beasley O.P."/>
            <person name="Bird C.P."/>
            <person name="Blakey S.E."/>
            <person name="Bridgeman A.M."/>
            <person name="Brown A.J."/>
            <person name="Buck D."/>
            <person name="Burrill W.D."/>
            <person name="Butler A.P."/>
            <person name="Carder C."/>
            <person name="Carter N.P."/>
            <person name="Chapman J.C."/>
            <person name="Clamp M."/>
            <person name="Clark G."/>
            <person name="Clark L.N."/>
            <person name="Clark S.Y."/>
            <person name="Clee C.M."/>
            <person name="Clegg S."/>
            <person name="Cobley V.E."/>
            <person name="Collier R.E."/>
            <person name="Connor R.E."/>
            <person name="Corby N.R."/>
            <person name="Coulson A."/>
            <person name="Coville G.J."/>
            <person name="Deadman R."/>
            <person name="Dhami P.D."/>
            <person name="Dunn M."/>
            <person name="Ellington A.G."/>
            <person name="Frankland J.A."/>
            <person name="Fraser A."/>
            <person name="French L."/>
            <person name="Garner P."/>
            <person name="Grafham D.V."/>
            <person name="Griffiths C."/>
            <person name="Griffiths M.N.D."/>
            <person name="Gwilliam R."/>
            <person name="Hall R.E."/>
            <person name="Hammond S."/>
            <person name="Harley J.L."/>
            <person name="Heath P.D."/>
            <person name="Ho S."/>
            <person name="Holden J.L."/>
            <person name="Howden P.J."/>
            <person name="Huckle E."/>
            <person name="Hunt A.R."/>
            <person name="Hunt S.E."/>
            <person name="Jekosch K."/>
            <person name="Johnson C.M."/>
            <person name="Johnson D."/>
            <person name="Kay M.P."/>
            <person name="Kimberley A.M."/>
            <person name="King A."/>
            <person name="Knights A."/>
            <person name="Laird G.K."/>
            <person name="Lawlor S."/>
            <person name="Lehvaeslaiho M.H."/>
            <person name="Leversha M.A."/>
            <person name="Lloyd C."/>
            <person name="Lloyd D.M."/>
            <person name="Lovell J.D."/>
            <person name="Marsh V.L."/>
            <person name="Martin S.L."/>
            <person name="McConnachie L.J."/>
            <person name="McLay K."/>
            <person name="McMurray A.A."/>
            <person name="Milne S.A."/>
            <person name="Mistry D."/>
            <person name="Moore M.J.F."/>
            <person name="Mullikin J.C."/>
            <person name="Nickerson T."/>
            <person name="Oliver K."/>
            <person name="Parker A."/>
            <person name="Patel R."/>
            <person name="Pearce T.A.V."/>
            <person name="Peck A.I."/>
            <person name="Phillimore B.J.C.T."/>
            <person name="Prathalingam S.R."/>
            <person name="Plumb R.W."/>
            <person name="Ramsay H."/>
            <person name="Rice C.M."/>
            <person name="Ross M.T."/>
            <person name="Scott C.E."/>
            <person name="Sehra H.K."/>
            <person name="Shownkeen R."/>
            <person name="Sims S."/>
            <person name="Skuce C.D."/>
            <person name="Smith M.L."/>
            <person name="Soderlund C."/>
            <person name="Steward C.A."/>
            <person name="Sulston J.E."/>
            <person name="Swann R.M."/>
            <person name="Sycamore N."/>
            <person name="Taylor R."/>
            <person name="Tee L."/>
            <person name="Thomas D.W."/>
            <person name="Thorpe A."/>
            <person name="Tracey A."/>
            <person name="Tromans A.C."/>
            <person name="Vaudin M."/>
            <person name="Wall M."/>
            <person name="Wallis J.M."/>
            <person name="Whitehead S.L."/>
            <person name="Whittaker P."/>
            <person name="Willey D.L."/>
            <person name="Williams L."/>
            <person name="Williams S.A."/>
            <person name="Wilming L."/>
            <person name="Wray P.W."/>
            <person name="Hubbard T."/>
            <person name="Durbin R.M."/>
            <person name="Bentley D.R."/>
            <person name="Beck S."/>
            <person name="Rogers J."/>
        </authorList>
    </citation>
    <scope>NUCLEOTIDE SEQUENCE [LARGE SCALE GENOMIC DNA]</scope>
</reference>
<proteinExistence type="inferred from homology"/>
<sequence length="102" mass="11544">MSVMKPCLMTIAILMILAQKTPGGLFRSHNGKSREPWNPCELYQGMCRNACREYEIQYLTCPNDQKCCLKLSVKITSSKNVKEDYDSNSNLSVTNSSSYSHI</sequence>
<name>DB116_HUMAN</name>
<gene>
    <name type="primary">DEFB116</name>
    <name type="synonym">DEFB16</name>
</gene>
<keyword id="KW-0044">Antibiotic</keyword>
<keyword id="KW-0929">Antimicrobial</keyword>
<keyword id="KW-0211">Defensin</keyword>
<keyword id="KW-1015">Disulfide bond</keyword>
<keyword id="KW-1185">Reference proteome</keyword>
<keyword id="KW-0964">Secreted</keyword>
<keyword id="KW-0732">Signal</keyword>
<dbReference type="EMBL" id="DQ012020">
    <property type="protein sequence ID" value="AAY59756.1"/>
    <property type="molecule type" value="mRNA"/>
</dbReference>
<dbReference type="EMBL" id="AL031650">
    <property type="status" value="NOT_ANNOTATED_CDS"/>
    <property type="molecule type" value="Genomic_DNA"/>
</dbReference>
<dbReference type="CCDS" id="CCDS42860.1"/>
<dbReference type="RefSeq" id="NP_001032820.1">
    <property type="nucleotide sequence ID" value="NM_001037731.1"/>
</dbReference>
<dbReference type="SMR" id="Q30KQ4"/>
<dbReference type="BioGRID" id="128844">
    <property type="interactions" value="7"/>
</dbReference>
<dbReference type="IntAct" id="Q30KQ4">
    <property type="interactions" value="7"/>
</dbReference>
<dbReference type="STRING" id="9606.ENSP00000383396"/>
<dbReference type="iPTMnet" id="Q30KQ4"/>
<dbReference type="PhosphoSitePlus" id="Q30KQ4"/>
<dbReference type="BioMuta" id="DEFB116"/>
<dbReference type="DMDM" id="84028878"/>
<dbReference type="PaxDb" id="9606-ENSP00000383396"/>
<dbReference type="Antibodypedia" id="49711">
    <property type="antibodies" value="9 antibodies from 6 providers"/>
</dbReference>
<dbReference type="DNASU" id="245930"/>
<dbReference type="Ensembl" id="ENST00000400549.1">
    <property type="protein sequence ID" value="ENSP00000383396.1"/>
    <property type="gene ID" value="ENSG00000215545.1"/>
</dbReference>
<dbReference type="GeneID" id="245930"/>
<dbReference type="KEGG" id="hsa:245930"/>
<dbReference type="MANE-Select" id="ENST00000400549.1">
    <property type="protein sequence ID" value="ENSP00000383396.1"/>
    <property type="RefSeq nucleotide sequence ID" value="NM_001037731.1"/>
    <property type="RefSeq protein sequence ID" value="NP_001032820.1"/>
</dbReference>
<dbReference type="UCSC" id="uc010ztm.2">
    <property type="organism name" value="human"/>
</dbReference>
<dbReference type="AGR" id="HGNC:18097"/>
<dbReference type="CTD" id="245930"/>
<dbReference type="DisGeNET" id="245930"/>
<dbReference type="GeneCards" id="DEFB116"/>
<dbReference type="HGNC" id="HGNC:18097">
    <property type="gene designation" value="DEFB116"/>
</dbReference>
<dbReference type="HPA" id="ENSG00000215545">
    <property type="expression patterns" value="Not detected"/>
</dbReference>
<dbReference type="neXtProt" id="NX_Q30KQ4"/>
<dbReference type="PharmGKB" id="PA38493"/>
<dbReference type="VEuPathDB" id="HostDB:ENSG00000215545"/>
<dbReference type="eggNOG" id="ENOG502TF8H">
    <property type="taxonomic scope" value="Eukaryota"/>
</dbReference>
<dbReference type="GeneTree" id="ENSGT00390000001502"/>
<dbReference type="HOGENOM" id="CLU_2482789_0_0_1"/>
<dbReference type="InParanoid" id="Q30KQ4"/>
<dbReference type="OMA" id="PCLMTIV"/>
<dbReference type="OrthoDB" id="9836790at2759"/>
<dbReference type="PAN-GO" id="Q30KQ4">
    <property type="GO annotations" value="0 GO annotations based on evolutionary models"/>
</dbReference>
<dbReference type="PhylomeDB" id="Q30KQ4"/>
<dbReference type="PathwayCommons" id="Q30KQ4"/>
<dbReference type="Reactome" id="R-HSA-1461957">
    <property type="pathway name" value="Beta defensins"/>
</dbReference>
<dbReference type="Reactome" id="R-HSA-1461973">
    <property type="pathway name" value="Defensins"/>
</dbReference>
<dbReference type="SignaLink" id="Q30KQ4"/>
<dbReference type="BioGRID-ORCS" id="245930">
    <property type="hits" value="9 hits in 1103 CRISPR screens"/>
</dbReference>
<dbReference type="GenomeRNAi" id="245930"/>
<dbReference type="Pharos" id="Q30KQ4">
    <property type="development level" value="Tdark"/>
</dbReference>
<dbReference type="PRO" id="PR:Q30KQ4"/>
<dbReference type="Proteomes" id="UP000005640">
    <property type="component" value="Chromosome 20"/>
</dbReference>
<dbReference type="RNAct" id="Q30KQ4">
    <property type="molecule type" value="protein"/>
</dbReference>
<dbReference type="Bgee" id="ENSG00000215545">
    <property type="expression patterns" value="Expressed in cell and 20 other cell types or tissues"/>
</dbReference>
<dbReference type="GO" id="GO:0005576">
    <property type="term" value="C:extracellular region"/>
    <property type="evidence" value="ECO:0007669"/>
    <property type="project" value="UniProtKB-SubCell"/>
</dbReference>
<dbReference type="GO" id="GO:0042742">
    <property type="term" value="P:defense response to bacterium"/>
    <property type="evidence" value="ECO:0007669"/>
    <property type="project" value="UniProtKB-KW"/>
</dbReference>
<dbReference type="GO" id="GO:0045087">
    <property type="term" value="P:innate immune response"/>
    <property type="evidence" value="ECO:0007669"/>
    <property type="project" value="InterPro"/>
</dbReference>
<dbReference type="InterPro" id="IPR025933">
    <property type="entry name" value="Beta_defensin_dom"/>
</dbReference>
<dbReference type="Pfam" id="PF13841">
    <property type="entry name" value="Defensin_beta_2"/>
    <property type="match status" value="1"/>
</dbReference>
<evidence type="ECO:0000250" key="1"/>
<evidence type="ECO:0000255" key="2"/>
<evidence type="ECO:0000256" key="3">
    <source>
        <dbReference type="SAM" id="MobiDB-lite"/>
    </source>
</evidence>
<evidence type="ECO:0000305" key="4"/>
<feature type="signal peptide" evidence="2">
    <location>
        <begin position="1"/>
        <end position="23"/>
    </location>
</feature>
<feature type="chain" id="PRO_0000045344" description="Beta-defensin 116">
    <location>
        <begin position="24"/>
        <end position="102"/>
    </location>
</feature>
<feature type="region of interest" description="Disordered" evidence="3">
    <location>
        <begin position="83"/>
        <end position="102"/>
    </location>
</feature>
<feature type="compositionally biased region" description="Low complexity" evidence="3">
    <location>
        <begin position="87"/>
        <end position="102"/>
    </location>
</feature>
<feature type="disulfide bond" evidence="1">
    <location>
        <begin position="40"/>
        <end position="67"/>
    </location>
</feature>
<feature type="disulfide bond" evidence="1">
    <location>
        <begin position="47"/>
        <end position="61"/>
    </location>
</feature>
<feature type="disulfide bond" evidence="1">
    <location>
        <begin position="51"/>
        <end position="68"/>
    </location>
</feature>
<feature type="sequence variant" id="VAR_048863" description="In dbSNP:rs6119768.">
    <original>Q</original>
    <variation>L</variation>
    <location>
        <position position="19"/>
    </location>
</feature>